<protein>
    <recommendedName>
        <fullName>Germ cell-less protein-like 1</fullName>
        <shortName>mGcl-1</shortName>
    </recommendedName>
    <alternativeName>
        <fullName>DP-interacting protein</fullName>
        <shortName>DIP</shortName>
    </alternativeName>
</protein>
<proteinExistence type="evidence at protein level"/>
<accession>Q920G9</accession>
<accession>Q9DBW5</accession>
<accession>Q9QUP6</accession>
<sequence length="524" mass="59654">MGALSSRVLRPAGRTEQPEPTPGAGGAARRSDAGEDAGHSFCYCPGGRKRKRSSGTFCYCHPDSETDDDEDEGDEQQRLLNTPRRKKLKSTSKYIYQTLFLNGENSDIKICALGEEWSLHKIYLCQSGYFSSMFSGSWKESSMNIIELEIPDQNIDIEALQVAFGSLYRDDVLIKPSRVVAILAAACMLQLDGLIQQCGETMKETISVRTVCGYYTSAGTYGLDSVKKKCLEWLLNNLMTHQSVELFKELSINVMKQLIGSSNLFVMQVEMDVYTALKKWMFLQLVPSWNGSLKQLLTETDVWFSKWKKDFEGTTFLETEQGKPFAPVFRHLRLQYIISDLASARIIEQDSLVPSEWLAAVYKQQWLAMLRAEQDSEVGPQEINKEELEGNSMRCGRKLAKDGEYCWRWTGFNFGFDLLVTYTNRYIIFKRNTLNQPCSGSVSLQPRRSIAFRLRLASFDSSGKLICSRATGYQILTLEKDQEQVVMNLDSRLLIFPLYICCNFLYISPEKRTESNRHPENPGH</sequence>
<evidence type="ECO:0000250" key="1"/>
<evidence type="ECO:0000255" key="2"/>
<evidence type="ECO:0000255" key="3">
    <source>
        <dbReference type="PROSITE-ProRule" id="PRU00037"/>
    </source>
</evidence>
<evidence type="ECO:0000256" key="4">
    <source>
        <dbReference type="SAM" id="MobiDB-lite"/>
    </source>
</evidence>
<evidence type="ECO:0000305" key="5"/>
<evidence type="ECO:0007744" key="6">
    <source>
    </source>
</evidence>
<gene>
    <name type="primary">Gmcl1</name>
    <name type="synonym">Gcl</name>
    <name type="synonym">Gcl1</name>
</gene>
<keyword id="KW-0217">Developmental protein</keyword>
<keyword id="KW-0221">Differentiation</keyword>
<keyword id="KW-0539">Nucleus</keyword>
<keyword id="KW-0597">Phosphoprotein</keyword>
<keyword id="KW-1185">Reference proteome</keyword>
<keyword id="KW-0744">Spermatogenesis</keyword>
<dbReference type="EMBL" id="AF163665">
    <property type="protein sequence ID" value="AAD52204.1"/>
    <property type="molecule type" value="mRNA"/>
</dbReference>
<dbReference type="EMBL" id="AF186095">
    <property type="protein sequence ID" value="AAF01415.1"/>
    <property type="molecule type" value="mRNA"/>
</dbReference>
<dbReference type="EMBL" id="AF282322">
    <property type="protein sequence ID" value="AAK69515.1"/>
    <property type="molecule type" value="mRNA"/>
</dbReference>
<dbReference type="EMBL" id="AK004716">
    <property type="protein sequence ID" value="BAB23499.1"/>
    <property type="molecule type" value="mRNA"/>
</dbReference>
<dbReference type="EMBL" id="BC054767">
    <property type="protein sequence ID" value="AAH54767.1"/>
    <property type="molecule type" value="mRNA"/>
</dbReference>
<dbReference type="CCDS" id="CCDS20316.1"/>
<dbReference type="PIR" id="JC7090">
    <property type="entry name" value="JC7090"/>
</dbReference>
<dbReference type="RefSeq" id="NP_035948.3">
    <property type="nucleotide sequence ID" value="NM_011818.3"/>
</dbReference>
<dbReference type="SMR" id="Q920G9"/>
<dbReference type="BioGRID" id="204775">
    <property type="interactions" value="5"/>
</dbReference>
<dbReference type="DIP" id="DIP-24259N"/>
<dbReference type="FunCoup" id="Q920G9">
    <property type="interactions" value="4636"/>
</dbReference>
<dbReference type="STRING" id="10090.ENSMUSP00000001185"/>
<dbReference type="GlyGen" id="Q920G9">
    <property type="glycosylation" value="2 sites"/>
</dbReference>
<dbReference type="iPTMnet" id="Q920G9"/>
<dbReference type="PhosphoSitePlus" id="Q920G9"/>
<dbReference type="PaxDb" id="10090-ENSMUSP00000001185"/>
<dbReference type="ProteomicsDB" id="271402"/>
<dbReference type="Pumba" id="Q920G9"/>
<dbReference type="DNASU" id="23885"/>
<dbReference type="Ensembl" id="ENSMUST00000001185.14">
    <property type="protein sequence ID" value="ENSMUSP00000001185.8"/>
    <property type="gene ID" value="ENSMUSG00000001157.14"/>
</dbReference>
<dbReference type="GeneID" id="23885"/>
<dbReference type="KEGG" id="mmu:23885"/>
<dbReference type="UCSC" id="uc009csl.2">
    <property type="organism name" value="mouse"/>
</dbReference>
<dbReference type="AGR" id="MGI:1345156"/>
<dbReference type="CTD" id="64395"/>
<dbReference type="MGI" id="MGI:1345156">
    <property type="gene designation" value="Gmcl1"/>
</dbReference>
<dbReference type="VEuPathDB" id="HostDB:ENSMUSG00000001157"/>
<dbReference type="eggNOG" id="KOG4682">
    <property type="taxonomic scope" value="Eukaryota"/>
</dbReference>
<dbReference type="GeneTree" id="ENSGT00940000156185"/>
<dbReference type="HOGENOM" id="CLU_025961_2_0_1"/>
<dbReference type="InParanoid" id="Q920G9"/>
<dbReference type="OMA" id="TGFNYGM"/>
<dbReference type="OrthoDB" id="6359943at2759"/>
<dbReference type="PhylomeDB" id="Q920G9"/>
<dbReference type="TreeFam" id="TF316048"/>
<dbReference type="BioGRID-ORCS" id="23885">
    <property type="hits" value="1 hit in 76 CRISPR screens"/>
</dbReference>
<dbReference type="ChiTaRS" id="Gmcl1">
    <property type="organism name" value="mouse"/>
</dbReference>
<dbReference type="PRO" id="PR:Q920G9"/>
<dbReference type="Proteomes" id="UP000000589">
    <property type="component" value="Chromosome 6"/>
</dbReference>
<dbReference type="RNAct" id="Q920G9">
    <property type="molecule type" value="protein"/>
</dbReference>
<dbReference type="Bgee" id="ENSMUSG00000001157">
    <property type="expression patterns" value="Expressed in spermatocyte and 248 other cell types or tissues"/>
</dbReference>
<dbReference type="ExpressionAtlas" id="Q920G9">
    <property type="expression patterns" value="baseline and differential"/>
</dbReference>
<dbReference type="GO" id="GO:0005635">
    <property type="term" value="C:nuclear envelope"/>
    <property type="evidence" value="ECO:0000314"/>
    <property type="project" value="MGI"/>
</dbReference>
<dbReference type="GO" id="GO:0016363">
    <property type="term" value="C:nuclear matrix"/>
    <property type="evidence" value="ECO:0000314"/>
    <property type="project" value="MGI"/>
</dbReference>
<dbReference type="GO" id="GO:0007281">
    <property type="term" value="P:germ cell development"/>
    <property type="evidence" value="ECO:0007669"/>
    <property type="project" value="InterPro"/>
</dbReference>
<dbReference type="GO" id="GO:0006355">
    <property type="term" value="P:regulation of DNA-templated transcription"/>
    <property type="evidence" value="ECO:0000314"/>
    <property type="project" value="MGI"/>
</dbReference>
<dbReference type="GO" id="GO:0007283">
    <property type="term" value="P:spermatogenesis"/>
    <property type="evidence" value="ECO:0000304"/>
    <property type="project" value="MGI"/>
</dbReference>
<dbReference type="CDD" id="cd18495">
    <property type="entry name" value="BACK_GCL"/>
    <property type="match status" value="1"/>
</dbReference>
<dbReference type="CDD" id="cd18305">
    <property type="entry name" value="BTB_POZ_GCL"/>
    <property type="match status" value="1"/>
</dbReference>
<dbReference type="FunFam" id="3.30.710.10:FF:000092">
    <property type="entry name" value="Germ cell-less, spermatogenesis associated 1"/>
    <property type="match status" value="1"/>
</dbReference>
<dbReference type="Gene3D" id="1.25.40.420">
    <property type="match status" value="1"/>
</dbReference>
<dbReference type="Gene3D" id="3.30.710.10">
    <property type="entry name" value="Potassium Channel Kv1.1, Chain A"/>
    <property type="match status" value="1"/>
</dbReference>
<dbReference type="InterPro" id="IPR011705">
    <property type="entry name" value="BACK"/>
</dbReference>
<dbReference type="InterPro" id="IPR000210">
    <property type="entry name" value="BTB/POZ_dom"/>
</dbReference>
<dbReference type="InterPro" id="IPR043380">
    <property type="entry name" value="Gcl-like"/>
</dbReference>
<dbReference type="InterPro" id="IPR011333">
    <property type="entry name" value="SKP1/BTB/POZ_sf"/>
</dbReference>
<dbReference type="PANTHER" id="PTHR23231">
    <property type="entry name" value="GERM CELL-LESS PROTEIN"/>
    <property type="match status" value="1"/>
</dbReference>
<dbReference type="PANTHER" id="PTHR23231:SF19">
    <property type="entry name" value="GERM CELL-LESS PROTEIN-LIKE 1"/>
    <property type="match status" value="1"/>
</dbReference>
<dbReference type="Pfam" id="PF07707">
    <property type="entry name" value="BACK"/>
    <property type="match status" value="1"/>
</dbReference>
<dbReference type="Pfam" id="PF00651">
    <property type="entry name" value="BTB"/>
    <property type="match status" value="1"/>
</dbReference>
<dbReference type="SMART" id="SM00875">
    <property type="entry name" value="BACK"/>
    <property type="match status" value="1"/>
</dbReference>
<dbReference type="SMART" id="SM00225">
    <property type="entry name" value="BTB"/>
    <property type="match status" value="1"/>
</dbReference>
<dbReference type="SUPFAM" id="SSF54695">
    <property type="entry name" value="POZ domain"/>
    <property type="match status" value="1"/>
</dbReference>
<dbReference type="PROSITE" id="PS50097">
    <property type="entry name" value="BTB"/>
    <property type="match status" value="1"/>
</dbReference>
<comment type="function">
    <text>Possible function in spermatogenesis. Enhances the degradation of MDM2 and increases the amount of p53 probably by modulating the nucleocytoplasmic transport.</text>
</comment>
<comment type="subunit">
    <text evidence="1">Interacts with TMPO-Beta, TSG101 and TFDP2. Interacts with EMD (By similarity).</text>
</comment>
<comment type="subcellular location">
    <subcellularLocation>
        <location>Nucleus matrix</location>
    </subcellularLocation>
</comment>
<comment type="tissue specificity">
    <text>Ubiquitously expressed at low levels throughout development and in adult tissues.</text>
</comment>
<comment type="developmental stage">
    <text>Highest levels in pachytene and diplotene stage spermatocytes and primordial germ cells of the male and the female.</text>
</comment>
<feature type="chain" id="PRO_0000087521" description="Germ cell-less protein-like 1">
    <location>
        <begin position="1"/>
        <end position="524"/>
    </location>
</feature>
<feature type="domain" description="BTB" evidence="3">
    <location>
        <begin position="106"/>
        <end position="176"/>
    </location>
</feature>
<feature type="region of interest" description="Disordered" evidence="4">
    <location>
        <begin position="1"/>
        <end position="37"/>
    </location>
</feature>
<feature type="region of interest" description="Disordered" evidence="4">
    <location>
        <begin position="63"/>
        <end position="83"/>
    </location>
</feature>
<feature type="short sequence motif" description="Nuclear localization signal" evidence="2">
    <location>
        <begin position="47"/>
        <end position="53"/>
    </location>
</feature>
<feature type="short sequence motif" description="Nuclear localization signal" evidence="2">
    <location>
        <begin position="83"/>
        <end position="89"/>
    </location>
</feature>
<feature type="compositionally biased region" description="Acidic residues" evidence="4">
    <location>
        <begin position="65"/>
        <end position="74"/>
    </location>
</feature>
<feature type="modified residue" description="Phosphoserine" evidence="6">
    <location>
        <position position="64"/>
    </location>
</feature>
<feature type="modified residue" description="Phosphothreonine" evidence="6">
    <location>
        <position position="66"/>
    </location>
</feature>
<feature type="sequence conflict" description="In Ref. 3; AAK69515." evidence="5" ref="3">
    <original>P</original>
    <variation>L</variation>
    <location>
        <position position="151"/>
    </location>
</feature>
<feature type="sequence conflict" description="In Ref. 3; AAK69515." evidence="5" ref="3">
    <original>S</original>
    <variation>N</variation>
    <location>
        <position position="177"/>
    </location>
</feature>
<feature type="sequence conflict" description="In Ref. 3; AAK69515." evidence="5" ref="3">
    <original>D</original>
    <variation>N</variation>
    <location>
        <position position="192"/>
    </location>
</feature>
<feature type="sequence conflict" description="In Ref. 3; AAK69515." evidence="5" ref="3">
    <original>C</original>
    <variation>W</variation>
    <location>
        <position position="198"/>
    </location>
</feature>
<feature type="sequence conflict" description="In Ref. 4; BAB23499." evidence="5" ref="4">
    <original>E</original>
    <variation>G</variation>
    <location>
        <position position="386"/>
    </location>
</feature>
<reference key="1">
    <citation type="journal article" date="1999" name="Biochem. Biophys. Res. Commun.">
        <title>Molecular cloning and genomic organization of mouse homologue of Drosophila germ cell-less and its expression in germ lineage cells.</title>
        <authorList>
            <person name="Kimura T."/>
            <person name="Yomogida K."/>
            <person name="Iwai N."/>
            <person name="Kato Y."/>
            <person name="Nakano T."/>
        </authorList>
    </citation>
    <scope>NUCLEOTIDE SEQUENCE [MRNA]</scope>
    <source>
        <strain>C57BL/6J</strain>
        <tissue>Testis</tissue>
    </source>
</reference>
<reference key="2">
    <citation type="journal article" date="2000" name="Mech. Dev.">
        <title>Identification of a mouse germ cell-less homologue with conserved activity in Drosophila.</title>
        <authorList>
            <person name="Leatherman J.L."/>
            <person name="Kaestner K.H."/>
            <person name="Jongens T.A."/>
        </authorList>
    </citation>
    <scope>NUCLEOTIDE SEQUENCE [MRNA]</scope>
    <source>
        <tissue>Testis</tissue>
    </source>
</reference>
<reference key="3">
    <citation type="journal article" date="2001" name="J. Cell Sci.">
        <title>Nuclear membrane protein LAP2beta mediates transcriptional repression alone and together with its binding partner GCL (germ-cell-less).</title>
        <authorList>
            <person name="Nili E."/>
            <person name="Cojocaru G.S."/>
            <person name="Kalma Y."/>
            <person name="Ginsberg D."/>
            <person name="Copeland N.G."/>
            <person name="Gilbert D.J."/>
            <person name="Jenkins N.A."/>
            <person name="Berger R."/>
            <person name="Shaklai S."/>
            <person name="Amariglio N."/>
            <person name="Brok-Simoni F."/>
            <person name="Simon A.J."/>
            <person name="Rechavi G."/>
        </authorList>
    </citation>
    <scope>NUCLEOTIDE SEQUENCE [MRNA]</scope>
    <scope>INTERACTION WITH TMPO-BETA</scope>
</reference>
<reference key="4">
    <citation type="journal article" date="2005" name="Science">
        <title>The transcriptional landscape of the mammalian genome.</title>
        <authorList>
            <person name="Carninci P."/>
            <person name="Kasukawa T."/>
            <person name="Katayama S."/>
            <person name="Gough J."/>
            <person name="Frith M.C."/>
            <person name="Maeda N."/>
            <person name="Oyama R."/>
            <person name="Ravasi T."/>
            <person name="Lenhard B."/>
            <person name="Wells C."/>
            <person name="Kodzius R."/>
            <person name="Shimokawa K."/>
            <person name="Bajic V.B."/>
            <person name="Brenner S.E."/>
            <person name="Batalov S."/>
            <person name="Forrest A.R."/>
            <person name="Zavolan M."/>
            <person name="Davis M.J."/>
            <person name="Wilming L.G."/>
            <person name="Aidinis V."/>
            <person name="Allen J.E."/>
            <person name="Ambesi-Impiombato A."/>
            <person name="Apweiler R."/>
            <person name="Aturaliya R.N."/>
            <person name="Bailey T.L."/>
            <person name="Bansal M."/>
            <person name="Baxter L."/>
            <person name="Beisel K.W."/>
            <person name="Bersano T."/>
            <person name="Bono H."/>
            <person name="Chalk A.M."/>
            <person name="Chiu K.P."/>
            <person name="Choudhary V."/>
            <person name="Christoffels A."/>
            <person name="Clutterbuck D.R."/>
            <person name="Crowe M.L."/>
            <person name="Dalla E."/>
            <person name="Dalrymple B.P."/>
            <person name="de Bono B."/>
            <person name="Della Gatta G."/>
            <person name="di Bernardo D."/>
            <person name="Down T."/>
            <person name="Engstrom P."/>
            <person name="Fagiolini M."/>
            <person name="Faulkner G."/>
            <person name="Fletcher C.F."/>
            <person name="Fukushima T."/>
            <person name="Furuno M."/>
            <person name="Futaki S."/>
            <person name="Gariboldi M."/>
            <person name="Georgii-Hemming P."/>
            <person name="Gingeras T.R."/>
            <person name="Gojobori T."/>
            <person name="Green R.E."/>
            <person name="Gustincich S."/>
            <person name="Harbers M."/>
            <person name="Hayashi Y."/>
            <person name="Hensch T.K."/>
            <person name="Hirokawa N."/>
            <person name="Hill D."/>
            <person name="Huminiecki L."/>
            <person name="Iacono M."/>
            <person name="Ikeo K."/>
            <person name="Iwama A."/>
            <person name="Ishikawa T."/>
            <person name="Jakt M."/>
            <person name="Kanapin A."/>
            <person name="Katoh M."/>
            <person name="Kawasawa Y."/>
            <person name="Kelso J."/>
            <person name="Kitamura H."/>
            <person name="Kitano H."/>
            <person name="Kollias G."/>
            <person name="Krishnan S.P."/>
            <person name="Kruger A."/>
            <person name="Kummerfeld S.K."/>
            <person name="Kurochkin I.V."/>
            <person name="Lareau L.F."/>
            <person name="Lazarevic D."/>
            <person name="Lipovich L."/>
            <person name="Liu J."/>
            <person name="Liuni S."/>
            <person name="McWilliam S."/>
            <person name="Madan Babu M."/>
            <person name="Madera M."/>
            <person name="Marchionni L."/>
            <person name="Matsuda H."/>
            <person name="Matsuzawa S."/>
            <person name="Miki H."/>
            <person name="Mignone F."/>
            <person name="Miyake S."/>
            <person name="Morris K."/>
            <person name="Mottagui-Tabar S."/>
            <person name="Mulder N."/>
            <person name="Nakano N."/>
            <person name="Nakauchi H."/>
            <person name="Ng P."/>
            <person name="Nilsson R."/>
            <person name="Nishiguchi S."/>
            <person name="Nishikawa S."/>
            <person name="Nori F."/>
            <person name="Ohara O."/>
            <person name="Okazaki Y."/>
            <person name="Orlando V."/>
            <person name="Pang K.C."/>
            <person name="Pavan W.J."/>
            <person name="Pavesi G."/>
            <person name="Pesole G."/>
            <person name="Petrovsky N."/>
            <person name="Piazza S."/>
            <person name="Reed J."/>
            <person name="Reid J.F."/>
            <person name="Ring B.Z."/>
            <person name="Ringwald M."/>
            <person name="Rost B."/>
            <person name="Ruan Y."/>
            <person name="Salzberg S.L."/>
            <person name="Sandelin A."/>
            <person name="Schneider C."/>
            <person name="Schoenbach C."/>
            <person name="Sekiguchi K."/>
            <person name="Semple C.A."/>
            <person name="Seno S."/>
            <person name="Sessa L."/>
            <person name="Sheng Y."/>
            <person name="Shibata Y."/>
            <person name="Shimada H."/>
            <person name="Shimada K."/>
            <person name="Silva D."/>
            <person name="Sinclair B."/>
            <person name="Sperling S."/>
            <person name="Stupka E."/>
            <person name="Sugiura K."/>
            <person name="Sultana R."/>
            <person name="Takenaka Y."/>
            <person name="Taki K."/>
            <person name="Tammoja K."/>
            <person name="Tan S.L."/>
            <person name="Tang S."/>
            <person name="Taylor M.S."/>
            <person name="Tegner J."/>
            <person name="Teichmann S.A."/>
            <person name="Ueda H.R."/>
            <person name="van Nimwegen E."/>
            <person name="Verardo R."/>
            <person name="Wei C.L."/>
            <person name="Yagi K."/>
            <person name="Yamanishi H."/>
            <person name="Zabarovsky E."/>
            <person name="Zhu S."/>
            <person name="Zimmer A."/>
            <person name="Hide W."/>
            <person name="Bult C."/>
            <person name="Grimmond S.M."/>
            <person name="Teasdale R.D."/>
            <person name="Liu E.T."/>
            <person name="Brusic V."/>
            <person name="Quackenbush J."/>
            <person name="Wahlestedt C."/>
            <person name="Mattick J.S."/>
            <person name="Hume D.A."/>
            <person name="Kai C."/>
            <person name="Sasaki D."/>
            <person name="Tomaru Y."/>
            <person name="Fukuda S."/>
            <person name="Kanamori-Katayama M."/>
            <person name="Suzuki M."/>
            <person name="Aoki J."/>
            <person name="Arakawa T."/>
            <person name="Iida J."/>
            <person name="Imamura K."/>
            <person name="Itoh M."/>
            <person name="Kato T."/>
            <person name="Kawaji H."/>
            <person name="Kawagashira N."/>
            <person name="Kawashima T."/>
            <person name="Kojima M."/>
            <person name="Kondo S."/>
            <person name="Konno H."/>
            <person name="Nakano K."/>
            <person name="Ninomiya N."/>
            <person name="Nishio T."/>
            <person name="Okada M."/>
            <person name="Plessy C."/>
            <person name="Shibata K."/>
            <person name="Shiraki T."/>
            <person name="Suzuki S."/>
            <person name="Tagami M."/>
            <person name="Waki K."/>
            <person name="Watahiki A."/>
            <person name="Okamura-Oho Y."/>
            <person name="Suzuki H."/>
            <person name="Kawai J."/>
            <person name="Hayashizaki Y."/>
        </authorList>
    </citation>
    <scope>NUCLEOTIDE SEQUENCE [LARGE SCALE MRNA]</scope>
    <source>
        <strain>C57BL/6J</strain>
        <tissue>Lung</tissue>
    </source>
</reference>
<reference key="5">
    <citation type="journal article" date="2004" name="Genome Res.">
        <title>The status, quality, and expansion of the NIH full-length cDNA project: the Mammalian Gene Collection (MGC).</title>
        <authorList>
            <consortium name="The MGC Project Team"/>
        </authorList>
    </citation>
    <scope>NUCLEOTIDE SEQUENCE [LARGE SCALE MRNA]</scope>
    <source>
        <strain>C57BL/6J</strain>
        <tissue>Brain</tissue>
    </source>
</reference>
<reference key="6">
    <citation type="journal article" date="1999" name="EMBO J.">
        <title>Integration of a growth-suppressing BTB/POZ domain protein with the DP component of the E2F transcription factor.</title>
        <authorList>
            <person name="de la Luna S."/>
            <person name="Allen K.E."/>
            <person name="Mason S.L."/>
            <person name="La Thangue N.B."/>
        </authorList>
    </citation>
    <scope>INTERACTION WITH TFDP2</scope>
</reference>
<reference key="7">
    <citation type="journal article" date="2003" name="Biochem. Biophys. Res. Commun.">
        <title>Enhanced degradation of MDM2 by a nuclear envelope component, mouse germ cell-less.</title>
        <authorList>
            <person name="Masuhara M."/>
            <person name="Nagao K."/>
            <person name="Nishikawa M."/>
            <person name="Kimura T."/>
            <person name="Nakano T."/>
        </authorList>
    </citation>
    <scope>INTERACTION WITH TSG101</scope>
</reference>
<reference key="8">
    <citation type="journal article" date="2010" name="Cell">
        <title>A tissue-specific atlas of mouse protein phosphorylation and expression.</title>
        <authorList>
            <person name="Huttlin E.L."/>
            <person name="Jedrychowski M.P."/>
            <person name="Elias J.E."/>
            <person name="Goswami T."/>
            <person name="Rad R."/>
            <person name="Beausoleil S.A."/>
            <person name="Villen J."/>
            <person name="Haas W."/>
            <person name="Sowa M.E."/>
            <person name="Gygi S.P."/>
        </authorList>
    </citation>
    <scope>PHOSPHORYLATION [LARGE SCALE ANALYSIS] AT SER-64 AND THR-66</scope>
    <scope>IDENTIFICATION BY MASS SPECTROMETRY [LARGE SCALE ANALYSIS]</scope>
    <source>
        <tissue>Testis</tissue>
    </source>
</reference>
<organism>
    <name type="scientific">Mus musculus</name>
    <name type="common">Mouse</name>
    <dbReference type="NCBI Taxonomy" id="10090"/>
    <lineage>
        <taxon>Eukaryota</taxon>
        <taxon>Metazoa</taxon>
        <taxon>Chordata</taxon>
        <taxon>Craniata</taxon>
        <taxon>Vertebrata</taxon>
        <taxon>Euteleostomi</taxon>
        <taxon>Mammalia</taxon>
        <taxon>Eutheria</taxon>
        <taxon>Euarchontoglires</taxon>
        <taxon>Glires</taxon>
        <taxon>Rodentia</taxon>
        <taxon>Myomorpha</taxon>
        <taxon>Muroidea</taxon>
        <taxon>Muridae</taxon>
        <taxon>Murinae</taxon>
        <taxon>Mus</taxon>
        <taxon>Mus</taxon>
    </lineage>
</organism>
<name>GMCL1_MOUSE</name>